<accession>B7MDP5</accession>
<gene>
    <name evidence="1" type="primary">rtcA</name>
    <name type="ordered locus">ECS88_3808</name>
</gene>
<dbReference type="EC" id="6.5.1.4" evidence="1"/>
<dbReference type="EMBL" id="CU928161">
    <property type="protein sequence ID" value="CAR05020.1"/>
    <property type="molecule type" value="Genomic_DNA"/>
</dbReference>
<dbReference type="RefSeq" id="WP_001350819.1">
    <property type="nucleotide sequence ID" value="NC_011742.1"/>
</dbReference>
<dbReference type="SMR" id="B7MDP5"/>
<dbReference type="KEGG" id="ecz:ECS88_3808"/>
<dbReference type="HOGENOM" id="CLU_027882_0_0_6"/>
<dbReference type="Proteomes" id="UP000000747">
    <property type="component" value="Chromosome"/>
</dbReference>
<dbReference type="GO" id="GO:0005737">
    <property type="term" value="C:cytoplasm"/>
    <property type="evidence" value="ECO:0007669"/>
    <property type="project" value="UniProtKB-SubCell"/>
</dbReference>
<dbReference type="GO" id="GO:0005524">
    <property type="term" value="F:ATP binding"/>
    <property type="evidence" value="ECO:0007669"/>
    <property type="project" value="UniProtKB-KW"/>
</dbReference>
<dbReference type="GO" id="GO:0003963">
    <property type="term" value="F:RNA-3'-phosphate cyclase activity"/>
    <property type="evidence" value="ECO:0007669"/>
    <property type="project" value="UniProtKB-UniRule"/>
</dbReference>
<dbReference type="GO" id="GO:0006396">
    <property type="term" value="P:RNA processing"/>
    <property type="evidence" value="ECO:0007669"/>
    <property type="project" value="InterPro"/>
</dbReference>
<dbReference type="FunFam" id="3.65.10.20:FF:000002">
    <property type="entry name" value="GM19193"/>
    <property type="match status" value="1"/>
</dbReference>
<dbReference type="FunFam" id="3.30.360.20:FF:000003">
    <property type="entry name" value="RNA 3'-terminal phosphate cyclase"/>
    <property type="match status" value="1"/>
</dbReference>
<dbReference type="Gene3D" id="3.65.10.20">
    <property type="entry name" value="RNA 3'-terminal phosphate cyclase domain"/>
    <property type="match status" value="1"/>
</dbReference>
<dbReference type="Gene3D" id="3.30.360.20">
    <property type="entry name" value="RNA 3'-terminal phosphate cyclase, insert domain"/>
    <property type="match status" value="1"/>
</dbReference>
<dbReference type="HAMAP" id="MF_00200">
    <property type="entry name" value="RTC"/>
    <property type="match status" value="1"/>
</dbReference>
<dbReference type="InterPro" id="IPR013791">
    <property type="entry name" value="RNA3'-term_phos_cycl_insert"/>
</dbReference>
<dbReference type="InterPro" id="IPR023797">
    <property type="entry name" value="RNA3'_phos_cyclase_dom"/>
</dbReference>
<dbReference type="InterPro" id="IPR037136">
    <property type="entry name" value="RNA3'_phos_cyclase_dom_sf"/>
</dbReference>
<dbReference type="InterPro" id="IPR000228">
    <property type="entry name" value="RNA3'_term_phos_cyc"/>
</dbReference>
<dbReference type="InterPro" id="IPR017770">
    <property type="entry name" value="RNA3'_term_phos_cyc_type_1"/>
</dbReference>
<dbReference type="InterPro" id="IPR020719">
    <property type="entry name" value="RNA3'_term_phos_cycl-like_CS"/>
</dbReference>
<dbReference type="InterPro" id="IPR013792">
    <property type="entry name" value="RNA3'P_cycl/enolpyr_Trfase_a/b"/>
</dbReference>
<dbReference type="InterPro" id="IPR036553">
    <property type="entry name" value="RPTC_insert"/>
</dbReference>
<dbReference type="NCBIfam" id="NF003246">
    <property type="entry name" value="PRK04204.1-2"/>
    <property type="match status" value="1"/>
</dbReference>
<dbReference type="NCBIfam" id="NF003247">
    <property type="entry name" value="PRK04204.1-3"/>
    <property type="match status" value="1"/>
</dbReference>
<dbReference type="NCBIfam" id="TIGR03399">
    <property type="entry name" value="RNA_3prim_cycl"/>
    <property type="match status" value="1"/>
</dbReference>
<dbReference type="PANTHER" id="PTHR11096">
    <property type="entry name" value="RNA 3' TERMINAL PHOSPHATE CYCLASE"/>
    <property type="match status" value="1"/>
</dbReference>
<dbReference type="PANTHER" id="PTHR11096:SF0">
    <property type="entry name" value="RNA 3'-TERMINAL PHOSPHATE CYCLASE"/>
    <property type="match status" value="1"/>
</dbReference>
<dbReference type="Pfam" id="PF01137">
    <property type="entry name" value="RTC"/>
    <property type="match status" value="1"/>
</dbReference>
<dbReference type="Pfam" id="PF05189">
    <property type="entry name" value="RTC_insert"/>
    <property type="match status" value="1"/>
</dbReference>
<dbReference type="PIRSF" id="PIRSF005378">
    <property type="entry name" value="RNA3'_term_phos_cycl_euk"/>
    <property type="match status" value="1"/>
</dbReference>
<dbReference type="SUPFAM" id="SSF55205">
    <property type="entry name" value="EPT/RTPC-like"/>
    <property type="match status" value="2"/>
</dbReference>
<dbReference type="SUPFAM" id="SSF52913">
    <property type="entry name" value="RNA 3'-terminal phosphate cyclase, RPTC, insert domain"/>
    <property type="match status" value="1"/>
</dbReference>
<dbReference type="PROSITE" id="PS01287">
    <property type="entry name" value="RTC"/>
    <property type="match status" value="1"/>
</dbReference>
<evidence type="ECO:0000255" key="1">
    <source>
        <dbReference type="HAMAP-Rule" id="MF_00200"/>
    </source>
</evidence>
<name>RTCA_ECO45</name>
<feature type="chain" id="PRO_1000195099" description="RNA 3'-terminal phosphate cyclase">
    <location>
        <begin position="1"/>
        <end position="338"/>
    </location>
</feature>
<feature type="active site" description="Tele-AMP-histidine intermediate" evidence="1">
    <location>
        <position position="308"/>
    </location>
</feature>
<feature type="binding site" evidence="1">
    <location>
        <position position="103"/>
    </location>
    <ligand>
        <name>ATP</name>
        <dbReference type="ChEBI" id="CHEBI:30616"/>
    </ligand>
</feature>
<feature type="binding site" evidence="1">
    <location>
        <begin position="283"/>
        <end position="287"/>
    </location>
    <ligand>
        <name>ATP</name>
        <dbReference type="ChEBI" id="CHEBI:30616"/>
    </ligand>
</feature>
<comment type="function">
    <text evidence="1">Catalyzes the conversion of 3'-phosphate to a 2',3'-cyclic phosphodiester at the end of RNA. The mechanism of action of the enzyme occurs in 3 steps: (A) adenylation of the enzyme by ATP; (B) transfer of adenylate to an RNA-N3'P to produce RNA-N3'PP5'A; (C) and attack of the adjacent 2'-hydroxyl on the 3'-phosphorus in the diester linkage to produce the cyclic end product. The biological role of this enzyme is unknown but it is likely to function in some aspects of cellular RNA processing.</text>
</comment>
<comment type="catalytic activity">
    <reaction evidence="1">
        <text>a 3'-end 3'-phospho-ribonucleotide-RNA + ATP = a 3'-end 2',3'-cyclophospho-ribonucleotide-RNA + AMP + diphosphate</text>
        <dbReference type="Rhea" id="RHEA:23976"/>
        <dbReference type="Rhea" id="RHEA-COMP:10463"/>
        <dbReference type="Rhea" id="RHEA-COMP:10464"/>
        <dbReference type="ChEBI" id="CHEBI:30616"/>
        <dbReference type="ChEBI" id="CHEBI:33019"/>
        <dbReference type="ChEBI" id="CHEBI:83062"/>
        <dbReference type="ChEBI" id="CHEBI:83064"/>
        <dbReference type="ChEBI" id="CHEBI:456215"/>
        <dbReference type="EC" id="6.5.1.4"/>
    </reaction>
</comment>
<comment type="subcellular location">
    <subcellularLocation>
        <location evidence="1">Cytoplasm</location>
    </subcellularLocation>
</comment>
<comment type="similarity">
    <text evidence="1">Belongs to the RNA 3'-terminal cyclase family. Type 1 subfamily.</text>
</comment>
<reference key="1">
    <citation type="journal article" date="2009" name="PLoS Genet.">
        <title>Organised genome dynamics in the Escherichia coli species results in highly diverse adaptive paths.</title>
        <authorList>
            <person name="Touchon M."/>
            <person name="Hoede C."/>
            <person name="Tenaillon O."/>
            <person name="Barbe V."/>
            <person name="Baeriswyl S."/>
            <person name="Bidet P."/>
            <person name="Bingen E."/>
            <person name="Bonacorsi S."/>
            <person name="Bouchier C."/>
            <person name="Bouvet O."/>
            <person name="Calteau A."/>
            <person name="Chiapello H."/>
            <person name="Clermont O."/>
            <person name="Cruveiller S."/>
            <person name="Danchin A."/>
            <person name="Diard M."/>
            <person name="Dossat C."/>
            <person name="Karoui M.E."/>
            <person name="Frapy E."/>
            <person name="Garry L."/>
            <person name="Ghigo J.M."/>
            <person name="Gilles A.M."/>
            <person name="Johnson J."/>
            <person name="Le Bouguenec C."/>
            <person name="Lescat M."/>
            <person name="Mangenot S."/>
            <person name="Martinez-Jehanne V."/>
            <person name="Matic I."/>
            <person name="Nassif X."/>
            <person name="Oztas S."/>
            <person name="Petit M.A."/>
            <person name="Pichon C."/>
            <person name="Rouy Z."/>
            <person name="Ruf C.S."/>
            <person name="Schneider D."/>
            <person name="Tourret J."/>
            <person name="Vacherie B."/>
            <person name="Vallenet D."/>
            <person name="Medigue C."/>
            <person name="Rocha E.P.C."/>
            <person name="Denamur E."/>
        </authorList>
    </citation>
    <scope>NUCLEOTIDE SEQUENCE [LARGE SCALE GENOMIC DNA]</scope>
    <source>
        <strain>S88 / ExPEC</strain>
    </source>
</reference>
<protein>
    <recommendedName>
        <fullName evidence="1">RNA 3'-terminal phosphate cyclase</fullName>
        <shortName evidence="1">RNA cyclase</shortName>
        <shortName evidence="1">RNA-3'-phosphate cyclase</shortName>
        <ecNumber evidence="1">6.5.1.4</ecNumber>
    </recommendedName>
</protein>
<proteinExistence type="inferred from homology"/>
<keyword id="KW-0067">ATP-binding</keyword>
<keyword id="KW-0963">Cytoplasm</keyword>
<keyword id="KW-0436">Ligase</keyword>
<keyword id="KW-0547">Nucleotide-binding</keyword>
<keyword id="KW-1185">Reference proteome</keyword>
<sequence length="338" mass="35896">MKRMIALDGAQGEGGGQILRSALSLSMITGQPFTITGIRAGRAKPGLLRQHLTAVKAAAEICRATVEGAELGSQRLVFRPGTVRGGDYRFAIGSAGSCTLVLQTVLPALWFADGPSRVEVSGGTDNPSAPPADFIRRVLEPLLAKIGVHQQTTLLRHGFYPAGGGVVATEVSPVASFNSLQLGERGNIVQMRGEVLLAGVPRHVAEREIATLAGSFSLHEQNIHNLPRDQGPGNTVSLEVESENITERFFVVGEKRVSAEVVAAQLVKEVKRYLASPAAVGEYLADQLVLPMALAGTGEFTVAHPSCHLLTNIAVVERFLPVRFGLIETDGVTRVSIE</sequence>
<organism>
    <name type="scientific">Escherichia coli O45:K1 (strain S88 / ExPEC)</name>
    <dbReference type="NCBI Taxonomy" id="585035"/>
    <lineage>
        <taxon>Bacteria</taxon>
        <taxon>Pseudomonadati</taxon>
        <taxon>Pseudomonadota</taxon>
        <taxon>Gammaproteobacteria</taxon>
        <taxon>Enterobacterales</taxon>
        <taxon>Enterobacteriaceae</taxon>
        <taxon>Escherichia</taxon>
    </lineage>
</organism>